<feature type="chain" id="PRO_0000227314" description="UvrABC system protein B">
    <location>
        <begin position="1"/>
        <end position="668"/>
    </location>
</feature>
<feature type="domain" description="Helicase ATP-binding" evidence="1">
    <location>
        <begin position="25"/>
        <end position="413"/>
    </location>
</feature>
<feature type="domain" description="Helicase C-terminal" evidence="1">
    <location>
        <begin position="429"/>
        <end position="595"/>
    </location>
</feature>
<feature type="domain" description="UVR" evidence="1">
    <location>
        <begin position="629"/>
        <end position="664"/>
    </location>
</feature>
<feature type="short sequence motif" description="Beta-hairpin">
    <location>
        <begin position="91"/>
        <end position="114"/>
    </location>
</feature>
<feature type="binding site" evidence="1">
    <location>
        <begin position="38"/>
        <end position="45"/>
    </location>
    <ligand>
        <name>ATP</name>
        <dbReference type="ChEBI" id="CHEBI:30616"/>
    </ligand>
</feature>
<comment type="function">
    <text evidence="1">The UvrABC repair system catalyzes the recognition and processing of DNA lesions. A damage recognition complex composed of 2 UvrA and 2 UvrB subunits scans DNA for abnormalities. Upon binding of the UvrA(2)B(2) complex to a putative damaged site, the DNA wraps around one UvrB monomer. DNA wrap is dependent on ATP binding by UvrB and probably causes local melting of the DNA helix, facilitating insertion of UvrB beta-hairpin between the DNA strands. Then UvrB probes one DNA strand for the presence of a lesion. If a lesion is found the UvrA subunits dissociate and the UvrB-DNA preincision complex is formed. This complex is subsequently bound by UvrC and the second UvrB is released. If no lesion is found, the DNA wraps around the other UvrB subunit that will check the other stand for damage.</text>
</comment>
<comment type="subunit">
    <text evidence="1">Forms a heterotetramer with UvrA during the search for lesions. Interacts with UvrC in an incision complex.</text>
</comment>
<comment type="subcellular location">
    <subcellularLocation>
        <location evidence="1">Cytoplasm</location>
    </subcellularLocation>
</comment>
<comment type="domain">
    <text evidence="1">The beta-hairpin motif is involved in DNA binding.</text>
</comment>
<comment type="similarity">
    <text evidence="1">Belongs to the UvrB family.</text>
</comment>
<name>UVRB_FRATT</name>
<organism>
    <name type="scientific">Francisella tularensis subsp. tularensis (strain SCHU S4 / Schu 4)</name>
    <dbReference type="NCBI Taxonomy" id="177416"/>
    <lineage>
        <taxon>Bacteria</taxon>
        <taxon>Pseudomonadati</taxon>
        <taxon>Pseudomonadota</taxon>
        <taxon>Gammaproteobacteria</taxon>
        <taxon>Thiotrichales</taxon>
        <taxon>Francisellaceae</taxon>
        <taxon>Francisella</taxon>
    </lineage>
</organism>
<protein>
    <recommendedName>
        <fullName evidence="1">UvrABC system protein B</fullName>
        <shortName evidence="1">Protein UvrB</shortName>
    </recommendedName>
    <alternativeName>
        <fullName evidence="1">Excinuclease ABC subunit B</fullName>
    </alternativeName>
</protein>
<gene>
    <name evidence="1" type="primary">uvrB</name>
    <name type="ordered locus">FTT_1199c</name>
</gene>
<keyword id="KW-0067">ATP-binding</keyword>
<keyword id="KW-0963">Cytoplasm</keyword>
<keyword id="KW-0227">DNA damage</keyword>
<keyword id="KW-0228">DNA excision</keyword>
<keyword id="KW-0234">DNA repair</keyword>
<keyword id="KW-0267">Excision nuclease</keyword>
<keyword id="KW-0547">Nucleotide-binding</keyword>
<keyword id="KW-1185">Reference proteome</keyword>
<keyword id="KW-0742">SOS response</keyword>
<sequence length="668" mass="76222">MNKFNLVTKYAPAGDQPQAIQSLVNGINTGLQHQVLLGVTGSGKTYTMANVIQQTQKPCLILAHNKTLAAQLYSEFKQYFPDNAVEYFVSYYDYYQPEAYIAASDTYIEKDSSVNEHIEQMRLSATKAILERNDVIIVATVSAIYGLGDPEQYMQMLLHLKVGEELGLKKAQTKLVEMQYSRNDMDFSRGSFRVRGEVLDIFPADSEKDAIRVEFFDDEIEAISVIDSLTSKKLKSLHRATIFPSTHYVASKERKEIVIEDIKKELKERVKYFEKEGKLLEAQRIEQRTKYDIEMIQELGYCTGIENYSRLLSGRAPGYPPPTLIDYLPENALVIVDESHVTLPQFGGMYKGDLSRKSNLVNYGFRLPSALDNRPLKFNEFESLLPQTIYVSATPANYELEKSQNTVQQVIRPTGLLDPEVFVRPVAIQVEDALSEINKAIAKEERVLITTLTKKMVENLTEYLSEHGVNVRYLHSDIDTVERVQIIHDLRHGVFDVLVGINLLREGLDMPEVGVLLIFDADKEGFLRSEKSLIQTIGRVARNQNGRAILYADVVTKSMQKAMDETLRRRKLQDEYNQKHNIVPKTIIKNIDDMLDSSPEMQKRAYKNNLRLKVDDVDVSAILGMTEATKVIKALEKRMRAYAKELEFEKATTIRDKITEVKQKFINL</sequence>
<dbReference type="EMBL" id="AJ749949">
    <property type="protein sequence ID" value="CAG45832.1"/>
    <property type="molecule type" value="Genomic_DNA"/>
</dbReference>
<dbReference type="RefSeq" id="WP_003021449.1">
    <property type="nucleotide sequence ID" value="NC_006570.2"/>
</dbReference>
<dbReference type="RefSeq" id="YP_170158.1">
    <property type="nucleotide sequence ID" value="NC_006570.2"/>
</dbReference>
<dbReference type="SMR" id="Q5NFN4"/>
<dbReference type="IntAct" id="Q5NFN4">
    <property type="interactions" value="13"/>
</dbReference>
<dbReference type="STRING" id="177416.FTT_1199c"/>
<dbReference type="DNASU" id="3191920"/>
<dbReference type="EnsemblBacteria" id="CAG45832">
    <property type="protein sequence ID" value="CAG45832"/>
    <property type="gene ID" value="FTT_1199c"/>
</dbReference>
<dbReference type="KEGG" id="ftu:FTT_1199c"/>
<dbReference type="eggNOG" id="COG0556">
    <property type="taxonomic scope" value="Bacteria"/>
</dbReference>
<dbReference type="OrthoDB" id="9806651at2"/>
<dbReference type="Proteomes" id="UP000001174">
    <property type="component" value="Chromosome"/>
</dbReference>
<dbReference type="GO" id="GO:0005737">
    <property type="term" value="C:cytoplasm"/>
    <property type="evidence" value="ECO:0007669"/>
    <property type="project" value="UniProtKB-SubCell"/>
</dbReference>
<dbReference type="GO" id="GO:0009380">
    <property type="term" value="C:excinuclease repair complex"/>
    <property type="evidence" value="ECO:0007669"/>
    <property type="project" value="InterPro"/>
</dbReference>
<dbReference type="GO" id="GO:0005524">
    <property type="term" value="F:ATP binding"/>
    <property type="evidence" value="ECO:0007669"/>
    <property type="project" value="UniProtKB-UniRule"/>
</dbReference>
<dbReference type="GO" id="GO:0016887">
    <property type="term" value="F:ATP hydrolysis activity"/>
    <property type="evidence" value="ECO:0007669"/>
    <property type="project" value="InterPro"/>
</dbReference>
<dbReference type="GO" id="GO:0003677">
    <property type="term" value="F:DNA binding"/>
    <property type="evidence" value="ECO:0007669"/>
    <property type="project" value="UniProtKB-UniRule"/>
</dbReference>
<dbReference type="GO" id="GO:0009381">
    <property type="term" value="F:excinuclease ABC activity"/>
    <property type="evidence" value="ECO:0007669"/>
    <property type="project" value="UniProtKB-UniRule"/>
</dbReference>
<dbReference type="GO" id="GO:0006289">
    <property type="term" value="P:nucleotide-excision repair"/>
    <property type="evidence" value="ECO:0007669"/>
    <property type="project" value="UniProtKB-UniRule"/>
</dbReference>
<dbReference type="GO" id="GO:0009432">
    <property type="term" value="P:SOS response"/>
    <property type="evidence" value="ECO:0007669"/>
    <property type="project" value="UniProtKB-UniRule"/>
</dbReference>
<dbReference type="CDD" id="cd17916">
    <property type="entry name" value="DEXHc_UvrB"/>
    <property type="match status" value="1"/>
</dbReference>
<dbReference type="CDD" id="cd18790">
    <property type="entry name" value="SF2_C_UvrB"/>
    <property type="match status" value="1"/>
</dbReference>
<dbReference type="FunFam" id="3.40.50.300:FF:000477">
    <property type="entry name" value="UvrABC system protein B"/>
    <property type="match status" value="1"/>
</dbReference>
<dbReference type="Gene3D" id="6.10.140.240">
    <property type="match status" value="1"/>
</dbReference>
<dbReference type="Gene3D" id="3.40.50.300">
    <property type="entry name" value="P-loop containing nucleotide triphosphate hydrolases"/>
    <property type="match status" value="3"/>
</dbReference>
<dbReference type="Gene3D" id="4.10.860.10">
    <property type="entry name" value="UVR domain"/>
    <property type="match status" value="1"/>
</dbReference>
<dbReference type="HAMAP" id="MF_00204">
    <property type="entry name" value="UvrB"/>
    <property type="match status" value="1"/>
</dbReference>
<dbReference type="InterPro" id="IPR006935">
    <property type="entry name" value="Helicase/UvrB_N"/>
</dbReference>
<dbReference type="InterPro" id="IPR014001">
    <property type="entry name" value="Helicase_ATP-bd"/>
</dbReference>
<dbReference type="InterPro" id="IPR001650">
    <property type="entry name" value="Helicase_C-like"/>
</dbReference>
<dbReference type="InterPro" id="IPR027417">
    <property type="entry name" value="P-loop_NTPase"/>
</dbReference>
<dbReference type="InterPro" id="IPR001943">
    <property type="entry name" value="UVR_dom"/>
</dbReference>
<dbReference type="InterPro" id="IPR036876">
    <property type="entry name" value="UVR_dom_sf"/>
</dbReference>
<dbReference type="InterPro" id="IPR004807">
    <property type="entry name" value="UvrB"/>
</dbReference>
<dbReference type="InterPro" id="IPR041471">
    <property type="entry name" value="UvrB_inter"/>
</dbReference>
<dbReference type="InterPro" id="IPR024759">
    <property type="entry name" value="UvrB_YAD/RRR_dom"/>
</dbReference>
<dbReference type="NCBIfam" id="NF003673">
    <property type="entry name" value="PRK05298.1"/>
    <property type="match status" value="1"/>
</dbReference>
<dbReference type="NCBIfam" id="TIGR00631">
    <property type="entry name" value="uvrb"/>
    <property type="match status" value="1"/>
</dbReference>
<dbReference type="PANTHER" id="PTHR24029">
    <property type="entry name" value="UVRABC SYSTEM PROTEIN B"/>
    <property type="match status" value="1"/>
</dbReference>
<dbReference type="PANTHER" id="PTHR24029:SF0">
    <property type="entry name" value="UVRABC SYSTEM PROTEIN B"/>
    <property type="match status" value="1"/>
</dbReference>
<dbReference type="Pfam" id="PF00271">
    <property type="entry name" value="Helicase_C"/>
    <property type="match status" value="1"/>
</dbReference>
<dbReference type="Pfam" id="PF04851">
    <property type="entry name" value="ResIII"/>
    <property type="match status" value="1"/>
</dbReference>
<dbReference type="Pfam" id="PF02151">
    <property type="entry name" value="UVR"/>
    <property type="match status" value="1"/>
</dbReference>
<dbReference type="Pfam" id="PF12344">
    <property type="entry name" value="UvrB"/>
    <property type="match status" value="1"/>
</dbReference>
<dbReference type="Pfam" id="PF17757">
    <property type="entry name" value="UvrB_inter"/>
    <property type="match status" value="1"/>
</dbReference>
<dbReference type="SMART" id="SM00487">
    <property type="entry name" value="DEXDc"/>
    <property type="match status" value="1"/>
</dbReference>
<dbReference type="SMART" id="SM00490">
    <property type="entry name" value="HELICc"/>
    <property type="match status" value="1"/>
</dbReference>
<dbReference type="SUPFAM" id="SSF46600">
    <property type="entry name" value="C-terminal UvrC-binding domain of UvrB"/>
    <property type="match status" value="1"/>
</dbReference>
<dbReference type="SUPFAM" id="SSF52540">
    <property type="entry name" value="P-loop containing nucleoside triphosphate hydrolases"/>
    <property type="match status" value="2"/>
</dbReference>
<dbReference type="PROSITE" id="PS51192">
    <property type="entry name" value="HELICASE_ATP_BIND_1"/>
    <property type="match status" value="2"/>
</dbReference>
<dbReference type="PROSITE" id="PS51194">
    <property type="entry name" value="HELICASE_CTER"/>
    <property type="match status" value="1"/>
</dbReference>
<dbReference type="PROSITE" id="PS50151">
    <property type="entry name" value="UVR"/>
    <property type="match status" value="1"/>
</dbReference>
<reference key="1">
    <citation type="journal article" date="2005" name="Nat. Genet.">
        <title>The complete genome sequence of Francisella tularensis, the causative agent of tularemia.</title>
        <authorList>
            <person name="Larsson P."/>
            <person name="Oyston P.C.F."/>
            <person name="Chain P."/>
            <person name="Chu M.C."/>
            <person name="Duffield M."/>
            <person name="Fuxelius H.-H."/>
            <person name="Garcia E."/>
            <person name="Haelltorp G."/>
            <person name="Johansson D."/>
            <person name="Isherwood K.E."/>
            <person name="Karp P.D."/>
            <person name="Larsson E."/>
            <person name="Liu Y."/>
            <person name="Michell S."/>
            <person name="Prior J."/>
            <person name="Prior R."/>
            <person name="Malfatti S."/>
            <person name="Sjoestedt A."/>
            <person name="Svensson K."/>
            <person name="Thompson N."/>
            <person name="Vergez L."/>
            <person name="Wagg J.K."/>
            <person name="Wren B.W."/>
            <person name="Lindler L.E."/>
            <person name="Andersson S.G.E."/>
            <person name="Forsman M."/>
            <person name="Titball R.W."/>
        </authorList>
    </citation>
    <scope>NUCLEOTIDE SEQUENCE [LARGE SCALE GENOMIC DNA]</scope>
    <source>
        <strain>SCHU S4 / Schu 4</strain>
    </source>
</reference>
<proteinExistence type="inferred from homology"/>
<evidence type="ECO:0000255" key="1">
    <source>
        <dbReference type="HAMAP-Rule" id="MF_00204"/>
    </source>
</evidence>
<accession>Q5NFN4</accession>